<accession>B2TIR0</accession>
<sequence length="161" mass="17942">MNVKGRVFKYGDNVDTDVIIPARYLNTSNHKELASHCMEDIDKEFVNNVKDGDIIVANKNFGCGSSREHAPIAIKAAGISCVIASTFARIFYRNSINIGLPILECDEAVKNINHGDELEVDFSTGIIKNLSKNEQYQGEAFPEFMQKIIDNDGLIGYIRNK</sequence>
<evidence type="ECO:0000255" key="1">
    <source>
        <dbReference type="HAMAP-Rule" id="MF_01032"/>
    </source>
</evidence>
<dbReference type="EC" id="4.2.1.33" evidence="1"/>
<dbReference type="EMBL" id="CP001056">
    <property type="protein sequence ID" value="ACD24511.1"/>
    <property type="molecule type" value="Genomic_DNA"/>
</dbReference>
<dbReference type="SMR" id="B2TIR0"/>
<dbReference type="KEGG" id="cbk:CLL_A0323"/>
<dbReference type="PATRIC" id="fig|935198.13.peg.298"/>
<dbReference type="HOGENOM" id="CLU_081378_1_1_9"/>
<dbReference type="UniPathway" id="UPA00048">
    <property type="reaction ID" value="UER00071"/>
</dbReference>
<dbReference type="Proteomes" id="UP000001195">
    <property type="component" value="Chromosome"/>
</dbReference>
<dbReference type="GO" id="GO:0003861">
    <property type="term" value="F:3-isopropylmalate dehydratase activity"/>
    <property type="evidence" value="ECO:0007669"/>
    <property type="project" value="UniProtKB-UniRule"/>
</dbReference>
<dbReference type="GO" id="GO:0009098">
    <property type="term" value="P:L-leucine biosynthetic process"/>
    <property type="evidence" value="ECO:0007669"/>
    <property type="project" value="UniProtKB-UniRule"/>
</dbReference>
<dbReference type="CDD" id="cd01577">
    <property type="entry name" value="IPMI_Swivel"/>
    <property type="match status" value="1"/>
</dbReference>
<dbReference type="FunFam" id="3.20.19.10:FF:000007">
    <property type="entry name" value="Isopropylmalate/citramalate isomerase small subunit"/>
    <property type="match status" value="1"/>
</dbReference>
<dbReference type="Gene3D" id="3.20.19.10">
    <property type="entry name" value="Aconitase, domain 4"/>
    <property type="match status" value="1"/>
</dbReference>
<dbReference type="HAMAP" id="MF_01032">
    <property type="entry name" value="LeuD_type2"/>
    <property type="match status" value="1"/>
</dbReference>
<dbReference type="InterPro" id="IPR015928">
    <property type="entry name" value="Aconitase/3IPM_dehydase_swvl"/>
</dbReference>
<dbReference type="InterPro" id="IPR000573">
    <property type="entry name" value="AconitaseA/IPMdHydase_ssu_swvl"/>
</dbReference>
<dbReference type="InterPro" id="IPR033940">
    <property type="entry name" value="IPMI_Swivel"/>
</dbReference>
<dbReference type="InterPro" id="IPR050075">
    <property type="entry name" value="LeuD"/>
</dbReference>
<dbReference type="InterPro" id="IPR011824">
    <property type="entry name" value="LeuD/DmdB_bac"/>
</dbReference>
<dbReference type="InterPro" id="IPR011827">
    <property type="entry name" value="LeuD_type2/HacB/DmdB"/>
</dbReference>
<dbReference type="NCBIfam" id="TIGR02084">
    <property type="entry name" value="leud"/>
    <property type="match status" value="1"/>
</dbReference>
<dbReference type="NCBIfam" id="TIGR02087">
    <property type="entry name" value="LEUD_arch"/>
    <property type="match status" value="1"/>
</dbReference>
<dbReference type="PANTHER" id="PTHR43345:SF2">
    <property type="entry name" value="3-ISOPROPYLMALATE DEHYDRATASE SMALL SUBUNIT 1"/>
    <property type="match status" value="1"/>
</dbReference>
<dbReference type="PANTHER" id="PTHR43345">
    <property type="entry name" value="3-ISOPROPYLMALATE DEHYDRATASE SMALL SUBUNIT 2-RELATED-RELATED"/>
    <property type="match status" value="1"/>
</dbReference>
<dbReference type="Pfam" id="PF00694">
    <property type="entry name" value="Aconitase_C"/>
    <property type="match status" value="1"/>
</dbReference>
<dbReference type="SUPFAM" id="SSF52016">
    <property type="entry name" value="LeuD/IlvD-like"/>
    <property type="match status" value="1"/>
</dbReference>
<proteinExistence type="inferred from homology"/>
<name>LEUD_CLOBB</name>
<keyword id="KW-0028">Amino-acid biosynthesis</keyword>
<keyword id="KW-0100">Branched-chain amino acid biosynthesis</keyword>
<keyword id="KW-0432">Leucine biosynthesis</keyword>
<keyword id="KW-0456">Lyase</keyword>
<feature type="chain" id="PRO_1000135847" description="3-isopropylmalate dehydratase small subunit">
    <location>
        <begin position="1"/>
        <end position="161"/>
    </location>
</feature>
<reference key="1">
    <citation type="submission" date="2008-04" db="EMBL/GenBank/DDBJ databases">
        <title>Complete sequence of Clostridium botulinum strain Eklund.</title>
        <authorList>
            <person name="Brinkac L.M."/>
            <person name="Brown J.L."/>
            <person name="Bruce D."/>
            <person name="Detter C."/>
            <person name="Munk C."/>
            <person name="Smith L.A."/>
            <person name="Smith T.J."/>
            <person name="Sutton G."/>
            <person name="Brettin T.S."/>
        </authorList>
    </citation>
    <scope>NUCLEOTIDE SEQUENCE [LARGE SCALE GENOMIC DNA]</scope>
    <source>
        <strain>Eklund 17B / Type B</strain>
    </source>
</reference>
<protein>
    <recommendedName>
        <fullName evidence="1">3-isopropylmalate dehydratase small subunit</fullName>
        <ecNumber evidence="1">4.2.1.33</ecNumber>
    </recommendedName>
    <alternativeName>
        <fullName evidence="1">Alpha-IPM isomerase</fullName>
        <shortName evidence="1">IPMI</shortName>
    </alternativeName>
    <alternativeName>
        <fullName evidence="1">Isopropylmalate isomerase</fullName>
    </alternativeName>
</protein>
<gene>
    <name evidence="1" type="primary">leuD</name>
    <name type="ordered locus">CLL_A0323</name>
</gene>
<comment type="function">
    <text evidence="1">Catalyzes the isomerization between 2-isopropylmalate and 3-isopropylmalate, via the formation of 2-isopropylmaleate.</text>
</comment>
<comment type="catalytic activity">
    <reaction evidence="1">
        <text>(2R,3S)-3-isopropylmalate = (2S)-2-isopropylmalate</text>
        <dbReference type="Rhea" id="RHEA:32287"/>
        <dbReference type="ChEBI" id="CHEBI:1178"/>
        <dbReference type="ChEBI" id="CHEBI:35121"/>
        <dbReference type="EC" id="4.2.1.33"/>
    </reaction>
</comment>
<comment type="pathway">
    <text evidence="1">Amino-acid biosynthesis; L-leucine biosynthesis; L-leucine from 3-methyl-2-oxobutanoate: step 2/4.</text>
</comment>
<comment type="subunit">
    <text evidence="1">Heterodimer of LeuC and LeuD.</text>
</comment>
<comment type="similarity">
    <text evidence="1">Belongs to the LeuD family. LeuD type 2 subfamily.</text>
</comment>
<organism>
    <name type="scientific">Clostridium botulinum (strain Eklund 17B / Type B)</name>
    <dbReference type="NCBI Taxonomy" id="935198"/>
    <lineage>
        <taxon>Bacteria</taxon>
        <taxon>Bacillati</taxon>
        <taxon>Bacillota</taxon>
        <taxon>Clostridia</taxon>
        <taxon>Eubacteriales</taxon>
        <taxon>Clostridiaceae</taxon>
        <taxon>Clostridium</taxon>
    </lineage>
</organism>